<reference key="1">
    <citation type="journal article" date="2008" name="PLoS Genet.">
        <title>The genome of Borrelia recurrentis, the agent of deadly louse-borne relapsing fever, is a degraded subset of tick-borne Borrelia duttonii.</title>
        <authorList>
            <person name="Lescot M."/>
            <person name="Audic S."/>
            <person name="Robert C."/>
            <person name="Nguyen T.T."/>
            <person name="Blanc G."/>
            <person name="Cutler S.J."/>
            <person name="Wincker P."/>
            <person name="Couloux A."/>
            <person name="Claverie J.-M."/>
            <person name="Raoult D."/>
            <person name="Drancourt M."/>
        </authorList>
    </citation>
    <scope>NUCLEOTIDE SEQUENCE [LARGE SCALE GENOMIC DNA]</scope>
    <source>
        <strain>A1</strain>
    </source>
</reference>
<gene>
    <name evidence="1" type="primary">rplL</name>
    <name type="ordered locus">BRE_388</name>
</gene>
<protein>
    <recommendedName>
        <fullName evidence="1">Large ribosomal subunit protein bL12</fullName>
    </recommendedName>
    <alternativeName>
        <fullName evidence="2">50S ribosomal protein L7/L12</fullName>
    </alternativeName>
</protein>
<feature type="chain" id="PRO_1000121399" description="Large ribosomal subunit protein bL12">
    <location>
        <begin position="1"/>
        <end position="123"/>
    </location>
</feature>
<name>RL7_BORRA</name>
<keyword id="KW-0687">Ribonucleoprotein</keyword>
<keyword id="KW-0689">Ribosomal protein</keyword>
<comment type="function">
    <text evidence="1">Forms part of the ribosomal stalk which helps the ribosome interact with GTP-bound translation factors. Is thus essential for accurate translation.</text>
</comment>
<comment type="subunit">
    <text evidence="1">Homodimer. Part of the ribosomal stalk of the 50S ribosomal subunit. Forms a multimeric L10(L12)X complex, where L10 forms an elongated spine to which 2 to 4 L12 dimers bind in a sequential fashion. Binds GTP-bound translation factors.</text>
</comment>
<comment type="similarity">
    <text evidence="1">Belongs to the bacterial ribosomal protein bL12 family.</text>
</comment>
<organism>
    <name type="scientific">Borrelia recurrentis (strain A1)</name>
    <dbReference type="NCBI Taxonomy" id="412418"/>
    <lineage>
        <taxon>Bacteria</taxon>
        <taxon>Pseudomonadati</taxon>
        <taxon>Spirochaetota</taxon>
        <taxon>Spirochaetia</taxon>
        <taxon>Spirochaetales</taxon>
        <taxon>Borreliaceae</taxon>
        <taxon>Borrelia</taxon>
    </lineage>
</organism>
<dbReference type="EMBL" id="CP000993">
    <property type="protein sequence ID" value="ACH94632.1"/>
    <property type="molecule type" value="Genomic_DNA"/>
</dbReference>
<dbReference type="RefSeq" id="WP_012538147.1">
    <property type="nucleotide sequence ID" value="NZ_CP169983.1"/>
</dbReference>
<dbReference type="SMR" id="B5RRJ8"/>
<dbReference type="KEGG" id="bre:BRE_388"/>
<dbReference type="HOGENOM" id="CLU_086499_3_2_12"/>
<dbReference type="Proteomes" id="UP000000612">
    <property type="component" value="Chromosome"/>
</dbReference>
<dbReference type="GO" id="GO:0022625">
    <property type="term" value="C:cytosolic large ribosomal subunit"/>
    <property type="evidence" value="ECO:0007669"/>
    <property type="project" value="TreeGrafter"/>
</dbReference>
<dbReference type="GO" id="GO:0003729">
    <property type="term" value="F:mRNA binding"/>
    <property type="evidence" value="ECO:0007669"/>
    <property type="project" value="TreeGrafter"/>
</dbReference>
<dbReference type="GO" id="GO:0003735">
    <property type="term" value="F:structural constituent of ribosome"/>
    <property type="evidence" value="ECO:0007669"/>
    <property type="project" value="InterPro"/>
</dbReference>
<dbReference type="GO" id="GO:0006412">
    <property type="term" value="P:translation"/>
    <property type="evidence" value="ECO:0007669"/>
    <property type="project" value="UniProtKB-UniRule"/>
</dbReference>
<dbReference type="CDD" id="cd00387">
    <property type="entry name" value="Ribosomal_L7_L12"/>
    <property type="match status" value="1"/>
</dbReference>
<dbReference type="FunFam" id="3.30.1390.10:FF:000001">
    <property type="entry name" value="50S ribosomal protein L7/L12"/>
    <property type="match status" value="1"/>
</dbReference>
<dbReference type="Gene3D" id="3.30.1390.10">
    <property type="match status" value="1"/>
</dbReference>
<dbReference type="Gene3D" id="1.20.5.710">
    <property type="entry name" value="Single helix bin"/>
    <property type="match status" value="1"/>
</dbReference>
<dbReference type="HAMAP" id="MF_00368">
    <property type="entry name" value="Ribosomal_bL12"/>
    <property type="match status" value="1"/>
</dbReference>
<dbReference type="InterPro" id="IPR000206">
    <property type="entry name" value="Ribosomal_bL12"/>
</dbReference>
<dbReference type="InterPro" id="IPR013823">
    <property type="entry name" value="Ribosomal_bL12_C"/>
</dbReference>
<dbReference type="InterPro" id="IPR014719">
    <property type="entry name" value="Ribosomal_bL12_C/ClpS-like"/>
</dbReference>
<dbReference type="InterPro" id="IPR008932">
    <property type="entry name" value="Ribosomal_bL12_oligo"/>
</dbReference>
<dbReference type="InterPro" id="IPR036235">
    <property type="entry name" value="Ribosomal_bL12_oligo_N_sf"/>
</dbReference>
<dbReference type="NCBIfam" id="TIGR00855">
    <property type="entry name" value="L12"/>
    <property type="match status" value="1"/>
</dbReference>
<dbReference type="PANTHER" id="PTHR45987">
    <property type="entry name" value="39S RIBOSOMAL PROTEIN L12"/>
    <property type="match status" value="1"/>
</dbReference>
<dbReference type="PANTHER" id="PTHR45987:SF4">
    <property type="entry name" value="LARGE RIBOSOMAL SUBUNIT PROTEIN BL12M"/>
    <property type="match status" value="1"/>
</dbReference>
<dbReference type="Pfam" id="PF00542">
    <property type="entry name" value="Ribosomal_L12"/>
    <property type="match status" value="1"/>
</dbReference>
<dbReference type="Pfam" id="PF16320">
    <property type="entry name" value="Ribosomal_L12_N"/>
    <property type="match status" value="1"/>
</dbReference>
<dbReference type="SUPFAM" id="SSF54736">
    <property type="entry name" value="ClpS-like"/>
    <property type="match status" value="1"/>
</dbReference>
<dbReference type="SUPFAM" id="SSF48300">
    <property type="entry name" value="Ribosomal protein L7/12, oligomerisation (N-terminal) domain"/>
    <property type="match status" value="1"/>
</dbReference>
<accession>B5RRJ8</accession>
<sequence>MALNKEDILTWLEEAKTSEVVELITAIEEKFGVTAAAVAVAAGPGPAAGGVEEQTEFDVMLVSFGDSKINVIKEVRAITGLGLGEAKALVESAPKAVKEGVSKSDAEEIKKKLEAVGAKVEIK</sequence>
<proteinExistence type="inferred from homology"/>
<evidence type="ECO:0000255" key="1">
    <source>
        <dbReference type="HAMAP-Rule" id="MF_00368"/>
    </source>
</evidence>
<evidence type="ECO:0000305" key="2"/>